<keyword id="KW-1003">Cell membrane</keyword>
<keyword id="KW-0342">GTP-binding</keyword>
<keyword id="KW-0449">Lipoprotein</keyword>
<keyword id="KW-0472">Membrane</keyword>
<keyword id="KW-0547">Nucleotide-binding</keyword>
<keyword id="KW-0636">Prenylation</keyword>
<keyword id="KW-0653">Protein transport</keyword>
<keyword id="KW-0813">Transport</keyword>
<feature type="chain" id="PRO_0000121279" description="Ras-related protein RHN1">
    <location>
        <begin position="1"/>
        <end position="200"/>
    </location>
</feature>
<feature type="short sequence motif" description="Effector region" evidence="3">
    <location>
        <begin position="39"/>
        <end position="47"/>
    </location>
</feature>
<feature type="binding site" evidence="2">
    <location>
        <begin position="17"/>
        <end position="25"/>
    </location>
    <ligand>
        <name>GTP</name>
        <dbReference type="ChEBI" id="CHEBI:37565"/>
    </ligand>
</feature>
<feature type="binding site" evidence="2">
    <location>
        <begin position="36"/>
        <end position="42"/>
    </location>
    <ligand>
        <name>GTP</name>
        <dbReference type="ChEBI" id="CHEBI:37565"/>
    </ligand>
</feature>
<feature type="binding site" evidence="2">
    <location>
        <begin position="65"/>
        <end position="69"/>
    </location>
    <ligand>
        <name>GTP</name>
        <dbReference type="ChEBI" id="CHEBI:37565"/>
    </ligand>
</feature>
<feature type="binding site" evidence="2">
    <location>
        <begin position="123"/>
        <end position="126"/>
    </location>
    <ligand>
        <name>GTP</name>
        <dbReference type="ChEBI" id="CHEBI:37565"/>
    </ligand>
</feature>
<feature type="binding site" evidence="2">
    <location>
        <begin position="153"/>
        <end position="155"/>
    </location>
    <ligand>
        <name>GTP</name>
        <dbReference type="ChEBI" id="CHEBI:37565"/>
    </ligand>
</feature>
<feature type="lipid moiety-binding region" description="S-geranylgeranyl cysteine" evidence="1">
    <location>
        <position position="198"/>
    </location>
</feature>
<feature type="lipid moiety-binding region" description="S-geranylgeranyl cysteine" evidence="1">
    <location>
        <position position="199"/>
    </location>
</feature>
<proteinExistence type="evidence at transcript level"/>
<protein>
    <recommendedName>
        <fullName>Ras-related protein RHN1</fullName>
    </recommendedName>
</protein>
<evidence type="ECO:0000250" key="1"/>
<evidence type="ECO:0000250" key="2">
    <source>
        <dbReference type="UniProtKB" id="P20339"/>
    </source>
</evidence>
<evidence type="ECO:0000255" key="3"/>
<evidence type="ECO:0000305" key="4"/>
<comment type="function">
    <text evidence="1">Protein transport. Probably involved in vesicular traffic (By similarity).</text>
</comment>
<comment type="subcellular location">
    <subcellularLocation>
        <location evidence="4">Cell membrane</location>
        <topology evidence="4">Lipid-anchor</topology>
        <orientation evidence="4">Cytoplasmic side</orientation>
    </subcellularLocation>
</comment>
<comment type="tissue specificity">
    <text>High in stem, root, and inflorescence.</text>
</comment>
<comment type="similarity">
    <text evidence="4">Belongs to the small GTPase superfamily. Rab family.</text>
</comment>
<accession>P31583</accession>
<organism>
    <name type="scientific">Nicotiana plumbaginifolia</name>
    <name type="common">Leadwort-leaved tobacco</name>
    <name type="synonym">Tex-Mex tobacco</name>
    <dbReference type="NCBI Taxonomy" id="4092"/>
    <lineage>
        <taxon>Eukaryota</taxon>
        <taxon>Viridiplantae</taxon>
        <taxon>Streptophyta</taxon>
        <taxon>Embryophyta</taxon>
        <taxon>Tracheophyta</taxon>
        <taxon>Spermatophyta</taxon>
        <taxon>Magnoliopsida</taxon>
        <taxon>eudicotyledons</taxon>
        <taxon>Gunneridae</taxon>
        <taxon>Pentapetalae</taxon>
        <taxon>asterids</taxon>
        <taxon>lamiids</taxon>
        <taxon>Solanales</taxon>
        <taxon>Solanaceae</taxon>
        <taxon>Nicotianoideae</taxon>
        <taxon>Nicotianeae</taxon>
        <taxon>Nicotiana</taxon>
    </lineage>
</organism>
<reference key="1">
    <citation type="journal article" date="1992" name="FEBS Lett.">
        <title>Analysis of a Nicotiana plumbaginifolia cDNA encoding a novel small GTP-binding protein.</title>
        <authorList>
            <person name="Terryn N."/>
            <person name="Anuntalabhochai S."/>
            <person name="van Montagu M."/>
            <person name="Inze D."/>
        </authorList>
    </citation>
    <scope>NUCLEOTIDE SEQUENCE [MRNA]</scope>
</reference>
<gene>
    <name type="primary">RHN1</name>
</gene>
<name>RHN1_NICPL</name>
<dbReference type="EMBL" id="X64941">
    <property type="protein sequence ID" value="CAA46112.1"/>
    <property type="molecule type" value="mRNA"/>
</dbReference>
<dbReference type="PIR" id="S20445">
    <property type="entry name" value="S20445"/>
</dbReference>
<dbReference type="SMR" id="P31583"/>
<dbReference type="GO" id="GO:0005886">
    <property type="term" value="C:plasma membrane"/>
    <property type="evidence" value="ECO:0007669"/>
    <property type="project" value="UniProtKB-SubCell"/>
</dbReference>
<dbReference type="GO" id="GO:0005525">
    <property type="term" value="F:GTP binding"/>
    <property type="evidence" value="ECO:0007669"/>
    <property type="project" value="UniProtKB-KW"/>
</dbReference>
<dbReference type="GO" id="GO:0003924">
    <property type="term" value="F:GTPase activity"/>
    <property type="evidence" value="ECO:0007669"/>
    <property type="project" value="InterPro"/>
</dbReference>
<dbReference type="GO" id="GO:0015031">
    <property type="term" value="P:protein transport"/>
    <property type="evidence" value="ECO:0007669"/>
    <property type="project" value="UniProtKB-KW"/>
</dbReference>
<dbReference type="CDD" id="cd01860">
    <property type="entry name" value="Rab5_related"/>
    <property type="match status" value="1"/>
</dbReference>
<dbReference type="FunFam" id="3.40.50.300:FF:000687">
    <property type="entry name" value="Ras-related protein RABF2b"/>
    <property type="match status" value="1"/>
</dbReference>
<dbReference type="Gene3D" id="3.40.50.300">
    <property type="entry name" value="P-loop containing nucleotide triphosphate hydrolases"/>
    <property type="match status" value="1"/>
</dbReference>
<dbReference type="InterPro" id="IPR027417">
    <property type="entry name" value="P-loop_NTPase"/>
</dbReference>
<dbReference type="InterPro" id="IPR005225">
    <property type="entry name" value="Small_GTP-bd"/>
</dbReference>
<dbReference type="InterPro" id="IPR001806">
    <property type="entry name" value="Small_GTPase"/>
</dbReference>
<dbReference type="NCBIfam" id="TIGR00231">
    <property type="entry name" value="small_GTP"/>
    <property type="match status" value="1"/>
</dbReference>
<dbReference type="PANTHER" id="PTHR47978">
    <property type="match status" value="1"/>
</dbReference>
<dbReference type="Pfam" id="PF00071">
    <property type="entry name" value="Ras"/>
    <property type="match status" value="1"/>
</dbReference>
<dbReference type="PRINTS" id="PR00449">
    <property type="entry name" value="RASTRNSFRMNG"/>
</dbReference>
<dbReference type="SMART" id="SM00175">
    <property type="entry name" value="RAB"/>
    <property type="match status" value="1"/>
</dbReference>
<dbReference type="SMART" id="SM00176">
    <property type="entry name" value="RAN"/>
    <property type="match status" value="1"/>
</dbReference>
<dbReference type="SMART" id="SM00173">
    <property type="entry name" value="RAS"/>
    <property type="match status" value="1"/>
</dbReference>
<dbReference type="SMART" id="SM00174">
    <property type="entry name" value="RHO"/>
    <property type="match status" value="1"/>
</dbReference>
<dbReference type="SUPFAM" id="SSF52540">
    <property type="entry name" value="P-loop containing nucleoside triphosphate hydrolases"/>
    <property type="match status" value="1"/>
</dbReference>
<dbReference type="PROSITE" id="PS51419">
    <property type="entry name" value="RAB"/>
    <property type="match status" value="1"/>
</dbReference>
<sequence length="200" mass="21843">MASSSHNNLNAKLVLLGDMGAGKSSLVIRFVKGQFLEFQESTIGAAFFSSTLAVNNATVKFEIWDTAGQERYHSLAPMYYRGAAAAIIVYDITSSDSFARAKKWVQELQKQGNPNMVMALAGNKADLEDRRKVTAEEARLYAEENGLFFMETSAKTAVNVNAIFYEIAKRLPRAQPAQNPAGMVLVDRAAEGTRATSCCT</sequence>